<evidence type="ECO:0000255" key="1">
    <source>
        <dbReference type="HAMAP-Rule" id="MF_00564"/>
    </source>
</evidence>
<name>RNPH_BRUME</name>
<organism>
    <name type="scientific">Brucella melitensis biotype 1 (strain ATCC 23456 / CCUG 17765 / NCTC 10094 / 16M)</name>
    <dbReference type="NCBI Taxonomy" id="224914"/>
    <lineage>
        <taxon>Bacteria</taxon>
        <taxon>Pseudomonadati</taxon>
        <taxon>Pseudomonadota</taxon>
        <taxon>Alphaproteobacteria</taxon>
        <taxon>Hyphomicrobiales</taxon>
        <taxon>Brucellaceae</taxon>
        <taxon>Brucella/Ochrobactrum group</taxon>
        <taxon>Brucella</taxon>
    </lineage>
</organism>
<protein>
    <recommendedName>
        <fullName evidence="1">Ribonuclease PH</fullName>
        <shortName evidence="1">RNase PH</shortName>
        <ecNumber evidence="1">2.7.7.56</ecNumber>
    </recommendedName>
    <alternativeName>
        <fullName evidence="1">tRNA nucleotidyltransferase</fullName>
    </alternativeName>
</protein>
<comment type="function">
    <text evidence="1">Phosphorolytic 3'-5' exoribonuclease that plays an important role in tRNA 3'-end maturation. Removes nucleotide residues following the 3'-CCA terminus of tRNAs; can also add nucleotides to the ends of RNA molecules by using nucleoside diphosphates as substrates, but this may not be physiologically important. Probably plays a role in initiation of 16S rRNA degradation (leading to ribosome degradation) during starvation.</text>
</comment>
<comment type="catalytic activity">
    <reaction evidence="1">
        <text>tRNA(n+1) + phosphate = tRNA(n) + a ribonucleoside 5'-diphosphate</text>
        <dbReference type="Rhea" id="RHEA:10628"/>
        <dbReference type="Rhea" id="RHEA-COMP:17343"/>
        <dbReference type="Rhea" id="RHEA-COMP:17344"/>
        <dbReference type="ChEBI" id="CHEBI:43474"/>
        <dbReference type="ChEBI" id="CHEBI:57930"/>
        <dbReference type="ChEBI" id="CHEBI:173114"/>
        <dbReference type="EC" id="2.7.7.56"/>
    </reaction>
</comment>
<comment type="subunit">
    <text evidence="1">Homohexameric ring arranged as a trimer of dimers.</text>
</comment>
<comment type="similarity">
    <text evidence="1">Belongs to the RNase PH family.</text>
</comment>
<keyword id="KW-0548">Nucleotidyltransferase</keyword>
<keyword id="KW-0694">RNA-binding</keyword>
<keyword id="KW-0698">rRNA processing</keyword>
<keyword id="KW-0808">Transferase</keyword>
<keyword id="KW-0819">tRNA processing</keyword>
<keyword id="KW-0820">tRNA-binding</keyword>
<proteinExistence type="inferred from homology"/>
<dbReference type="EC" id="2.7.7.56" evidence="1"/>
<dbReference type="EMBL" id="AE008917">
    <property type="protein sequence ID" value="AAL52956.1"/>
    <property type="molecule type" value="Genomic_DNA"/>
</dbReference>
<dbReference type="PIR" id="AI3473">
    <property type="entry name" value="AI3473"/>
</dbReference>
<dbReference type="RefSeq" id="WP_004684686.1">
    <property type="nucleotide sequence ID" value="NZ_GG703778.1"/>
</dbReference>
<dbReference type="SMR" id="Q8YEV2"/>
<dbReference type="GeneID" id="29594652"/>
<dbReference type="KEGG" id="bme:BMEI1775"/>
<dbReference type="KEGG" id="bmel:DK63_1710"/>
<dbReference type="PATRIC" id="fig|224914.52.peg.1808"/>
<dbReference type="eggNOG" id="COG0689">
    <property type="taxonomic scope" value="Bacteria"/>
</dbReference>
<dbReference type="PhylomeDB" id="Q8YEV2"/>
<dbReference type="Proteomes" id="UP000000419">
    <property type="component" value="Chromosome I"/>
</dbReference>
<dbReference type="GO" id="GO:0000175">
    <property type="term" value="F:3'-5'-RNA exonuclease activity"/>
    <property type="evidence" value="ECO:0007669"/>
    <property type="project" value="UniProtKB-UniRule"/>
</dbReference>
<dbReference type="GO" id="GO:0000049">
    <property type="term" value="F:tRNA binding"/>
    <property type="evidence" value="ECO:0007669"/>
    <property type="project" value="UniProtKB-UniRule"/>
</dbReference>
<dbReference type="GO" id="GO:0009022">
    <property type="term" value="F:tRNA nucleotidyltransferase activity"/>
    <property type="evidence" value="ECO:0007669"/>
    <property type="project" value="UniProtKB-UniRule"/>
</dbReference>
<dbReference type="GO" id="GO:0016075">
    <property type="term" value="P:rRNA catabolic process"/>
    <property type="evidence" value="ECO:0007669"/>
    <property type="project" value="UniProtKB-UniRule"/>
</dbReference>
<dbReference type="GO" id="GO:0006364">
    <property type="term" value="P:rRNA processing"/>
    <property type="evidence" value="ECO:0007669"/>
    <property type="project" value="UniProtKB-KW"/>
</dbReference>
<dbReference type="GO" id="GO:0008033">
    <property type="term" value="P:tRNA processing"/>
    <property type="evidence" value="ECO:0007669"/>
    <property type="project" value="UniProtKB-UniRule"/>
</dbReference>
<dbReference type="CDD" id="cd11362">
    <property type="entry name" value="RNase_PH_bact"/>
    <property type="match status" value="1"/>
</dbReference>
<dbReference type="FunFam" id="3.30.230.70:FF:000003">
    <property type="entry name" value="Ribonuclease PH"/>
    <property type="match status" value="1"/>
</dbReference>
<dbReference type="Gene3D" id="3.30.230.70">
    <property type="entry name" value="GHMP Kinase, N-terminal domain"/>
    <property type="match status" value="1"/>
</dbReference>
<dbReference type="HAMAP" id="MF_00564">
    <property type="entry name" value="RNase_PH"/>
    <property type="match status" value="1"/>
</dbReference>
<dbReference type="InterPro" id="IPR001247">
    <property type="entry name" value="ExoRNase_PH_dom1"/>
</dbReference>
<dbReference type="InterPro" id="IPR015847">
    <property type="entry name" value="ExoRNase_PH_dom2"/>
</dbReference>
<dbReference type="InterPro" id="IPR036345">
    <property type="entry name" value="ExoRNase_PH_dom2_sf"/>
</dbReference>
<dbReference type="InterPro" id="IPR027408">
    <property type="entry name" value="PNPase/RNase_PH_dom_sf"/>
</dbReference>
<dbReference type="InterPro" id="IPR020568">
    <property type="entry name" value="Ribosomal_Su5_D2-typ_SF"/>
</dbReference>
<dbReference type="InterPro" id="IPR050080">
    <property type="entry name" value="RNase_PH"/>
</dbReference>
<dbReference type="InterPro" id="IPR002381">
    <property type="entry name" value="RNase_PH_bac-type"/>
</dbReference>
<dbReference type="InterPro" id="IPR018336">
    <property type="entry name" value="RNase_PH_CS"/>
</dbReference>
<dbReference type="NCBIfam" id="TIGR01966">
    <property type="entry name" value="RNasePH"/>
    <property type="match status" value="1"/>
</dbReference>
<dbReference type="PANTHER" id="PTHR11953">
    <property type="entry name" value="EXOSOME COMPLEX COMPONENT"/>
    <property type="match status" value="1"/>
</dbReference>
<dbReference type="PANTHER" id="PTHR11953:SF0">
    <property type="entry name" value="EXOSOME COMPLEX COMPONENT RRP41"/>
    <property type="match status" value="1"/>
</dbReference>
<dbReference type="Pfam" id="PF01138">
    <property type="entry name" value="RNase_PH"/>
    <property type="match status" value="1"/>
</dbReference>
<dbReference type="Pfam" id="PF03725">
    <property type="entry name" value="RNase_PH_C"/>
    <property type="match status" value="1"/>
</dbReference>
<dbReference type="SUPFAM" id="SSF55666">
    <property type="entry name" value="Ribonuclease PH domain 2-like"/>
    <property type="match status" value="1"/>
</dbReference>
<dbReference type="SUPFAM" id="SSF54211">
    <property type="entry name" value="Ribosomal protein S5 domain 2-like"/>
    <property type="match status" value="1"/>
</dbReference>
<dbReference type="PROSITE" id="PS01277">
    <property type="entry name" value="RIBONUCLEASE_PH"/>
    <property type="match status" value="1"/>
</dbReference>
<gene>
    <name evidence="1" type="primary">rph</name>
    <name type="ordered locus">BMEI1775</name>
</gene>
<sequence length="238" mass="25937">MRPSKRAADEMRTISFERGVSKHAEGSCLVKFGDTHVLCTASLEEKVPGWMRNTGKGWVTAEYGMLPRSTGERMRREAAAGKQGGRTQEIQRLIGRSLRAVVDMQALGEMQITVDCDVIQADGGTRTAAITGGWVALHECLRWMEARQMVRVEKVLKDHVAAISCGIYEGVPVLDLDYAEDSVAETDSNFVMTGKGGIVEIQGTAEGVPFSEEEFGALMKLARSGIDRLVSLQKMAVA</sequence>
<reference key="1">
    <citation type="journal article" date="2002" name="Proc. Natl. Acad. Sci. U.S.A.">
        <title>The genome sequence of the facultative intracellular pathogen Brucella melitensis.</title>
        <authorList>
            <person name="DelVecchio V.G."/>
            <person name="Kapatral V."/>
            <person name="Redkar R.J."/>
            <person name="Patra G."/>
            <person name="Mujer C."/>
            <person name="Los T."/>
            <person name="Ivanova N."/>
            <person name="Anderson I."/>
            <person name="Bhattacharyya A."/>
            <person name="Lykidis A."/>
            <person name="Reznik G."/>
            <person name="Jablonski L."/>
            <person name="Larsen N."/>
            <person name="D'Souza M."/>
            <person name="Bernal A."/>
            <person name="Mazur M."/>
            <person name="Goltsman E."/>
            <person name="Selkov E."/>
            <person name="Elzer P.H."/>
            <person name="Hagius S."/>
            <person name="O'Callaghan D."/>
            <person name="Letesson J.-J."/>
            <person name="Haselkorn R."/>
            <person name="Kyrpides N.C."/>
            <person name="Overbeek R."/>
        </authorList>
    </citation>
    <scope>NUCLEOTIDE SEQUENCE [LARGE SCALE GENOMIC DNA]</scope>
    <source>
        <strain>ATCC 23456 / CCUG 17765 / NCTC 10094 / 16M</strain>
    </source>
</reference>
<accession>Q8YEV2</accession>
<feature type="chain" id="PRO_0000139876" description="Ribonuclease PH">
    <location>
        <begin position="1"/>
        <end position="238"/>
    </location>
</feature>
<feature type="binding site" evidence="1">
    <location>
        <position position="86"/>
    </location>
    <ligand>
        <name>phosphate</name>
        <dbReference type="ChEBI" id="CHEBI:43474"/>
        <note>substrate</note>
    </ligand>
</feature>
<feature type="binding site" evidence="1">
    <location>
        <begin position="124"/>
        <end position="126"/>
    </location>
    <ligand>
        <name>phosphate</name>
        <dbReference type="ChEBI" id="CHEBI:43474"/>
        <note>substrate</note>
    </ligand>
</feature>